<evidence type="ECO:0000250" key="1"/>
<evidence type="ECO:0000250" key="2">
    <source>
        <dbReference type="UniProtKB" id="Q9UK53"/>
    </source>
</evidence>
<evidence type="ECO:0000255" key="3">
    <source>
        <dbReference type="PROSITE-ProRule" id="PRU00146"/>
    </source>
</evidence>
<evidence type="ECO:0000256" key="4">
    <source>
        <dbReference type="SAM" id="MobiDB-lite"/>
    </source>
</evidence>
<evidence type="ECO:0000305" key="5"/>
<organism>
    <name type="scientific">Kluyveromyces lactis (strain ATCC 8585 / CBS 2359 / DSM 70799 / NBRC 1267 / NRRL Y-1140 / WM37)</name>
    <name type="common">Yeast</name>
    <name type="synonym">Candida sphaerica</name>
    <dbReference type="NCBI Taxonomy" id="284590"/>
    <lineage>
        <taxon>Eukaryota</taxon>
        <taxon>Fungi</taxon>
        <taxon>Dikarya</taxon>
        <taxon>Ascomycota</taxon>
        <taxon>Saccharomycotina</taxon>
        <taxon>Saccharomycetes</taxon>
        <taxon>Saccharomycetales</taxon>
        <taxon>Saccharomycetaceae</taxon>
        <taxon>Kluyveromyces</taxon>
    </lineage>
</organism>
<name>YNG2_KLULA</name>
<reference key="1">
    <citation type="journal article" date="2004" name="Nature">
        <title>Genome evolution in yeasts.</title>
        <authorList>
            <person name="Dujon B."/>
            <person name="Sherman D."/>
            <person name="Fischer G."/>
            <person name="Durrens P."/>
            <person name="Casaregola S."/>
            <person name="Lafontaine I."/>
            <person name="de Montigny J."/>
            <person name="Marck C."/>
            <person name="Neuveglise C."/>
            <person name="Talla E."/>
            <person name="Goffard N."/>
            <person name="Frangeul L."/>
            <person name="Aigle M."/>
            <person name="Anthouard V."/>
            <person name="Babour A."/>
            <person name="Barbe V."/>
            <person name="Barnay S."/>
            <person name="Blanchin S."/>
            <person name="Beckerich J.-M."/>
            <person name="Beyne E."/>
            <person name="Bleykasten C."/>
            <person name="Boisrame A."/>
            <person name="Boyer J."/>
            <person name="Cattolico L."/>
            <person name="Confanioleri F."/>
            <person name="de Daruvar A."/>
            <person name="Despons L."/>
            <person name="Fabre E."/>
            <person name="Fairhead C."/>
            <person name="Ferry-Dumazet H."/>
            <person name="Groppi A."/>
            <person name="Hantraye F."/>
            <person name="Hennequin C."/>
            <person name="Jauniaux N."/>
            <person name="Joyet P."/>
            <person name="Kachouri R."/>
            <person name="Kerrest A."/>
            <person name="Koszul R."/>
            <person name="Lemaire M."/>
            <person name="Lesur I."/>
            <person name="Ma L."/>
            <person name="Muller H."/>
            <person name="Nicaud J.-M."/>
            <person name="Nikolski M."/>
            <person name="Oztas S."/>
            <person name="Ozier-Kalogeropoulos O."/>
            <person name="Pellenz S."/>
            <person name="Potier S."/>
            <person name="Richard G.-F."/>
            <person name="Straub M.-L."/>
            <person name="Suleau A."/>
            <person name="Swennen D."/>
            <person name="Tekaia F."/>
            <person name="Wesolowski-Louvel M."/>
            <person name="Westhof E."/>
            <person name="Wirth B."/>
            <person name="Zeniou-Meyer M."/>
            <person name="Zivanovic Y."/>
            <person name="Bolotin-Fukuhara M."/>
            <person name="Thierry A."/>
            <person name="Bouchier C."/>
            <person name="Caudron B."/>
            <person name="Scarpelli C."/>
            <person name="Gaillardin C."/>
            <person name="Weissenbach J."/>
            <person name="Wincker P."/>
            <person name="Souciet J.-L."/>
        </authorList>
    </citation>
    <scope>NUCLEOTIDE SEQUENCE [LARGE SCALE GENOMIC DNA]</scope>
    <source>
        <strain>ATCC 8585 / CBS 2359 / DSM 70799 / NBRC 1267 / NRRL Y-1140 / WM37</strain>
    </source>
</reference>
<dbReference type="EMBL" id="CR382121">
    <property type="protein sequence ID" value="CAH02897.1"/>
    <property type="molecule type" value="Genomic_DNA"/>
</dbReference>
<dbReference type="RefSeq" id="XP_451309.1">
    <property type="nucleotide sequence ID" value="XM_451309.1"/>
</dbReference>
<dbReference type="SMR" id="Q6CXN0"/>
<dbReference type="FunCoup" id="Q6CXN0">
    <property type="interactions" value="330"/>
</dbReference>
<dbReference type="STRING" id="284590.Q6CXN0"/>
<dbReference type="PaxDb" id="284590-Q6CXN0"/>
<dbReference type="KEGG" id="kla:KLLA0_A06974g"/>
<dbReference type="eggNOG" id="KOG1973">
    <property type="taxonomic scope" value="Eukaryota"/>
</dbReference>
<dbReference type="HOGENOM" id="CLU_031900_2_0_1"/>
<dbReference type="InParanoid" id="Q6CXN0"/>
<dbReference type="OMA" id="GPNCKYE"/>
<dbReference type="Proteomes" id="UP000000598">
    <property type="component" value="Chromosome A"/>
</dbReference>
<dbReference type="GO" id="GO:0035267">
    <property type="term" value="C:NuA4 histone acetyltransferase complex"/>
    <property type="evidence" value="ECO:0007669"/>
    <property type="project" value="TreeGrafter"/>
</dbReference>
<dbReference type="GO" id="GO:0005634">
    <property type="term" value="C:nucleus"/>
    <property type="evidence" value="ECO:0007669"/>
    <property type="project" value="UniProtKB-SubCell"/>
</dbReference>
<dbReference type="GO" id="GO:0035064">
    <property type="term" value="F:methylated histone binding"/>
    <property type="evidence" value="ECO:0007669"/>
    <property type="project" value="TreeGrafter"/>
</dbReference>
<dbReference type="GO" id="GO:0008270">
    <property type="term" value="F:zinc ion binding"/>
    <property type="evidence" value="ECO:0007669"/>
    <property type="project" value="UniProtKB-KW"/>
</dbReference>
<dbReference type="GO" id="GO:0006325">
    <property type="term" value="P:chromatin organization"/>
    <property type="evidence" value="ECO:0007669"/>
    <property type="project" value="UniProtKB-KW"/>
</dbReference>
<dbReference type="GO" id="GO:0006281">
    <property type="term" value="P:DNA repair"/>
    <property type="evidence" value="ECO:0007669"/>
    <property type="project" value="UniProtKB-KW"/>
</dbReference>
<dbReference type="GO" id="GO:0051321">
    <property type="term" value="P:meiotic cell cycle"/>
    <property type="evidence" value="ECO:0007669"/>
    <property type="project" value="UniProtKB-KW"/>
</dbReference>
<dbReference type="GO" id="GO:0006355">
    <property type="term" value="P:regulation of DNA-templated transcription"/>
    <property type="evidence" value="ECO:0007669"/>
    <property type="project" value="TreeGrafter"/>
</dbReference>
<dbReference type="CDD" id="cd16858">
    <property type="entry name" value="ING_ING3_Yng2p"/>
    <property type="match status" value="1"/>
</dbReference>
<dbReference type="CDD" id="cd15505">
    <property type="entry name" value="PHD_ING"/>
    <property type="match status" value="1"/>
</dbReference>
<dbReference type="FunFam" id="3.30.40.10:FF:000436">
    <property type="entry name" value="Chromatin modification-related protein"/>
    <property type="match status" value="1"/>
</dbReference>
<dbReference type="Gene3D" id="6.10.140.1740">
    <property type="match status" value="1"/>
</dbReference>
<dbReference type="Gene3D" id="3.30.40.10">
    <property type="entry name" value="Zinc/RING finger domain, C3HC4 (zinc finger)"/>
    <property type="match status" value="1"/>
</dbReference>
<dbReference type="InterPro" id="IPR028651">
    <property type="entry name" value="ING_fam"/>
</dbReference>
<dbReference type="InterPro" id="IPR024610">
    <property type="entry name" value="ING_N_histone-binding"/>
</dbReference>
<dbReference type="InterPro" id="IPR019786">
    <property type="entry name" value="Zinc_finger_PHD-type_CS"/>
</dbReference>
<dbReference type="InterPro" id="IPR011011">
    <property type="entry name" value="Znf_FYVE_PHD"/>
</dbReference>
<dbReference type="InterPro" id="IPR001965">
    <property type="entry name" value="Znf_PHD"/>
</dbReference>
<dbReference type="InterPro" id="IPR019787">
    <property type="entry name" value="Znf_PHD-finger"/>
</dbReference>
<dbReference type="InterPro" id="IPR013083">
    <property type="entry name" value="Znf_RING/FYVE/PHD"/>
</dbReference>
<dbReference type="PANTHER" id="PTHR10333:SF100">
    <property type="entry name" value="CHROMATIN MODIFICATION-RELATED PROTEIN YNG2"/>
    <property type="match status" value="1"/>
</dbReference>
<dbReference type="PANTHER" id="PTHR10333">
    <property type="entry name" value="INHIBITOR OF GROWTH PROTEIN"/>
    <property type="match status" value="1"/>
</dbReference>
<dbReference type="Pfam" id="PF12998">
    <property type="entry name" value="ING"/>
    <property type="match status" value="1"/>
</dbReference>
<dbReference type="Pfam" id="PF00628">
    <property type="entry name" value="PHD"/>
    <property type="match status" value="1"/>
</dbReference>
<dbReference type="SMART" id="SM01408">
    <property type="entry name" value="ING"/>
    <property type="match status" value="1"/>
</dbReference>
<dbReference type="SMART" id="SM00249">
    <property type="entry name" value="PHD"/>
    <property type="match status" value="1"/>
</dbReference>
<dbReference type="SUPFAM" id="SSF57903">
    <property type="entry name" value="FYVE/PHD zinc finger"/>
    <property type="match status" value="1"/>
</dbReference>
<dbReference type="PROSITE" id="PS01359">
    <property type="entry name" value="ZF_PHD_1"/>
    <property type="match status" value="1"/>
</dbReference>
<dbReference type="PROSITE" id="PS50016">
    <property type="entry name" value="ZF_PHD_2"/>
    <property type="match status" value="1"/>
</dbReference>
<sequence length="295" mass="32764">MSSINERPQDPSSALEQATQDVANLKSEFHHIMDEMQVADKTLVSSREQYLREDYVLHKLVKQHGSLTKDPKEGSITETVEKEMKRCGDLQQQKCILANTALYLVTKHLSKIKANIESLEEDGLLAPLDDELSDKKAGSVDLGAGIAGLGNGTAGSGSSSGRKRPASSSSANGKGQKRKQQKKERSRSHQRAGTVSRDVSPNAGIGRDPTFDALAYNDDLFKMNQGGEEDDKQLYCFCQRVSYGEMVACDGPNCKYEWFHYSCVNLTEPPKGQWYCPECRLEIANQKLNKKKKKQ</sequence>
<keyword id="KW-0131">Cell cycle</keyword>
<keyword id="KW-0156">Chromatin regulator</keyword>
<keyword id="KW-0227">DNA damage</keyword>
<keyword id="KW-0234">DNA repair</keyword>
<keyword id="KW-0469">Meiosis</keyword>
<keyword id="KW-0479">Metal-binding</keyword>
<keyword id="KW-0539">Nucleus</keyword>
<keyword id="KW-1185">Reference proteome</keyword>
<keyword id="KW-0862">Zinc</keyword>
<keyword id="KW-0863">Zinc-finger</keyword>
<gene>
    <name type="primary">YNG2</name>
    <name type="ordered locus">KLLA0A06974g</name>
</gene>
<proteinExistence type="inferred from homology"/>
<feature type="chain" id="PRO_0000212677" description="Chromatin modification-related protein YNG2">
    <location>
        <begin position="1"/>
        <end position="295"/>
    </location>
</feature>
<feature type="zinc finger region" description="PHD-type" evidence="3">
    <location>
        <begin position="233"/>
        <end position="282"/>
    </location>
</feature>
<feature type="region of interest" description="Disordered" evidence="4">
    <location>
        <begin position="151"/>
        <end position="208"/>
    </location>
</feature>
<feature type="compositionally biased region" description="Low complexity" evidence="4">
    <location>
        <begin position="156"/>
        <end position="171"/>
    </location>
</feature>
<feature type="compositionally biased region" description="Basic residues" evidence="4">
    <location>
        <begin position="175"/>
        <end position="190"/>
    </location>
</feature>
<feature type="binding site" evidence="2">
    <location>
        <position position="236"/>
    </location>
    <ligand>
        <name>Zn(2+)</name>
        <dbReference type="ChEBI" id="CHEBI:29105"/>
        <label>1</label>
    </ligand>
</feature>
<feature type="binding site" evidence="2">
    <location>
        <position position="238"/>
    </location>
    <ligand>
        <name>Zn(2+)</name>
        <dbReference type="ChEBI" id="CHEBI:29105"/>
        <label>1</label>
    </ligand>
</feature>
<feature type="binding site" evidence="2">
    <location>
        <position position="249"/>
    </location>
    <ligand>
        <name>Zn(2+)</name>
        <dbReference type="ChEBI" id="CHEBI:29105"/>
        <label>2</label>
    </ligand>
</feature>
<feature type="binding site" evidence="2">
    <location>
        <position position="254"/>
    </location>
    <ligand>
        <name>Zn(2+)</name>
        <dbReference type="ChEBI" id="CHEBI:29105"/>
        <label>2</label>
    </ligand>
</feature>
<feature type="binding site" evidence="2">
    <location>
        <position position="260"/>
    </location>
    <ligand>
        <name>Zn(2+)</name>
        <dbReference type="ChEBI" id="CHEBI:29105"/>
        <label>1</label>
    </ligand>
</feature>
<feature type="binding site" evidence="2">
    <location>
        <position position="263"/>
    </location>
    <ligand>
        <name>Zn(2+)</name>
        <dbReference type="ChEBI" id="CHEBI:29105"/>
        <label>1</label>
    </ligand>
</feature>
<feature type="binding site" evidence="2">
    <location>
        <position position="276"/>
    </location>
    <ligand>
        <name>Zn(2+)</name>
        <dbReference type="ChEBI" id="CHEBI:29105"/>
        <label>2</label>
    </ligand>
</feature>
<feature type="binding site" evidence="2">
    <location>
        <position position="279"/>
    </location>
    <ligand>
        <name>Zn(2+)</name>
        <dbReference type="ChEBI" id="CHEBI:29105"/>
        <label>2</label>
    </ligand>
</feature>
<feature type="site" description="Histone H3K4me3 binding" evidence="2">
    <location>
        <position position="235"/>
    </location>
</feature>
<feature type="site" description="Histone H3K4me3 binding" evidence="2">
    <location>
        <position position="246"/>
    </location>
</feature>
<feature type="site" description="Histone H3K4me3 binding" evidence="2">
    <location>
        <position position="250"/>
    </location>
</feature>
<feature type="site" description="Histone H3K4me3 binding" evidence="2">
    <location>
        <position position="258"/>
    </location>
</feature>
<comment type="function">
    <text evidence="1">Component of the NuA4 histone acetyltransferase complex which is involved in transcriptional activation of selected genes principally by acetylation of nucleosomal histone H4 and H2A. The NuA4 complex is also involved in DNA repair. Involved in cell cycle progression and meiosis (By similarity).</text>
</comment>
<comment type="subunit">
    <text evidence="1">Interacts with H3K4me3 and to a lesser extent with H3K4me2. Component of the NuA4 histone acetyltransferase complex.</text>
</comment>
<comment type="subcellular location">
    <subcellularLocation>
        <location evidence="1">Nucleus</location>
    </subcellularLocation>
</comment>
<comment type="domain">
    <text evidence="1">The PHD-type zinc finger mediates the binding to H3K4me3.</text>
</comment>
<comment type="similarity">
    <text evidence="5">Belongs to the ING family.</text>
</comment>
<protein>
    <recommendedName>
        <fullName>Chromatin modification-related protein YNG2</fullName>
    </recommendedName>
    <alternativeName>
        <fullName>ING1 homolog 2</fullName>
    </alternativeName>
</protein>
<accession>Q6CXN0</accession>